<keyword id="KW-0687">Ribonucleoprotein</keyword>
<keyword id="KW-0689">Ribosomal protein</keyword>
<keyword id="KW-0694">RNA-binding</keyword>
<keyword id="KW-0699">rRNA-binding</keyword>
<evidence type="ECO:0000255" key="1">
    <source>
        <dbReference type="HAMAP-Rule" id="MF_01363"/>
    </source>
</evidence>
<evidence type="ECO:0000305" key="2"/>
<organism>
    <name type="scientific">Streptococcus pneumoniae (strain Taiwan19F-14)</name>
    <dbReference type="NCBI Taxonomy" id="487213"/>
    <lineage>
        <taxon>Bacteria</taxon>
        <taxon>Bacillati</taxon>
        <taxon>Bacillota</taxon>
        <taxon>Bacilli</taxon>
        <taxon>Lactobacillales</taxon>
        <taxon>Streptococcaceae</taxon>
        <taxon>Streptococcus</taxon>
    </lineage>
</organism>
<dbReference type="EMBL" id="CP000921">
    <property type="protein sequence ID" value="ACO23408.1"/>
    <property type="molecule type" value="Genomic_DNA"/>
</dbReference>
<dbReference type="RefSeq" id="WP_000109141.1">
    <property type="nucleotide sequence ID" value="NC_012469.1"/>
</dbReference>
<dbReference type="SMR" id="C1CRK5"/>
<dbReference type="GeneID" id="93739805"/>
<dbReference type="KEGG" id="snt:SPT_1151"/>
<dbReference type="HOGENOM" id="CLU_061463_3_1_9"/>
<dbReference type="GO" id="GO:0005737">
    <property type="term" value="C:cytoplasm"/>
    <property type="evidence" value="ECO:0007669"/>
    <property type="project" value="UniProtKB-ARBA"/>
</dbReference>
<dbReference type="GO" id="GO:1990904">
    <property type="term" value="C:ribonucleoprotein complex"/>
    <property type="evidence" value="ECO:0007669"/>
    <property type="project" value="UniProtKB-KW"/>
</dbReference>
<dbReference type="GO" id="GO:0005840">
    <property type="term" value="C:ribosome"/>
    <property type="evidence" value="ECO:0007669"/>
    <property type="project" value="UniProtKB-KW"/>
</dbReference>
<dbReference type="GO" id="GO:0019843">
    <property type="term" value="F:rRNA binding"/>
    <property type="evidence" value="ECO:0007669"/>
    <property type="project" value="UniProtKB-UniRule"/>
</dbReference>
<dbReference type="GO" id="GO:0003735">
    <property type="term" value="F:structural constituent of ribosome"/>
    <property type="evidence" value="ECO:0007669"/>
    <property type="project" value="InterPro"/>
</dbReference>
<dbReference type="GO" id="GO:0006412">
    <property type="term" value="P:translation"/>
    <property type="evidence" value="ECO:0007669"/>
    <property type="project" value="UniProtKB-UniRule"/>
</dbReference>
<dbReference type="HAMAP" id="MF_01363">
    <property type="entry name" value="Ribosomal_bL21"/>
    <property type="match status" value="1"/>
</dbReference>
<dbReference type="InterPro" id="IPR028909">
    <property type="entry name" value="bL21-like"/>
</dbReference>
<dbReference type="InterPro" id="IPR036164">
    <property type="entry name" value="bL21-like_sf"/>
</dbReference>
<dbReference type="InterPro" id="IPR001787">
    <property type="entry name" value="Ribosomal_bL21"/>
</dbReference>
<dbReference type="InterPro" id="IPR018258">
    <property type="entry name" value="Ribosomal_bL21_CS"/>
</dbReference>
<dbReference type="NCBIfam" id="TIGR00061">
    <property type="entry name" value="L21"/>
    <property type="match status" value="1"/>
</dbReference>
<dbReference type="PANTHER" id="PTHR21349">
    <property type="entry name" value="50S RIBOSOMAL PROTEIN L21"/>
    <property type="match status" value="1"/>
</dbReference>
<dbReference type="PANTHER" id="PTHR21349:SF0">
    <property type="entry name" value="LARGE RIBOSOMAL SUBUNIT PROTEIN BL21M"/>
    <property type="match status" value="1"/>
</dbReference>
<dbReference type="Pfam" id="PF00829">
    <property type="entry name" value="Ribosomal_L21p"/>
    <property type="match status" value="1"/>
</dbReference>
<dbReference type="SUPFAM" id="SSF141091">
    <property type="entry name" value="L21p-like"/>
    <property type="match status" value="1"/>
</dbReference>
<dbReference type="PROSITE" id="PS01169">
    <property type="entry name" value="RIBOSOMAL_L21"/>
    <property type="match status" value="1"/>
</dbReference>
<reference key="1">
    <citation type="journal article" date="2010" name="Genome Biol.">
        <title>Structure and dynamics of the pan-genome of Streptococcus pneumoniae and closely related species.</title>
        <authorList>
            <person name="Donati C."/>
            <person name="Hiller N.L."/>
            <person name="Tettelin H."/>
            <person name="Muzzi A."/>
            <person name="Croucher N.J."/>
            <person name="Angiuoli S.V."/>
            <person name="Oggioni M."/>
            <person name="Dunning Hotopp J.C."/>
            <person name="Hu F.Z."/>
            <person name="Riley D.R."/>
            <person name="Covacci A."/>
            <person name="Mitchell T.J."/>
            <person name="Bentley S.D."/>
            <person name="Kilian M."/>
            <person name="Ehrlich G.D."/>
            <person name="Rappuoli R."/>
            <person name="Moxon E.R."/>
            <person name="Masignani V."/>
        </authorList>
    </citation>
    <scope>NUCLEOTIDE SEQUENCE [LARGE SCALE GENOMIC DNA]</scope>
    <source>
        <strain>Taiwan19F-14</strain>
    </source>
</reference>
<sequence length="104" mass="11197">MSTYAIIKTGGKQVKVEVGQAVYVEKLNVEAGQEVTFNEVVLVGGENTVVGTPLVAGATVVGTVEKQGKQKKVVTYKYKPKKGSHRKQGHRQPYTKVVINAINA</sequence>
<accession>C1CRK5</accession>
<name>RL21_STRZT</name>
<proteinExistence type="inferred from homology"/>
<gene>
    <name evidence="1" type="primary">rplU</name>
    <name type="ordered locus">SPT_1151</name>
</gene>
<comment type="function">
    <text evidence="1">This protein binds to 23S rRNA in the presence of protein L20.</text>
</comment>
<comment type="subunit">
    <text evidence="1">Part of the 50S ribosomal subunit. Contacts protein L20.</text>
</comment>
<comment type="similarity">
    <text evidence="1">Belongs to the bacterial ribosomal protein bL21 family.</text>
</comment>
<protein>
    <recommendedName>
        <fullName evidence="1">Large ribosomal subunit protein bL21</fullName>
    </recommendedName>
    <alternativeName>
        <fullName evidence="2">50S ribosomal protein L21</fullName>
    </alternativeName>
</protein>
<feature type="chain" id="PRO_1000166747" description="Large ribosomal subunit protein bL21">
    <location>
        <begin position="1"/>
        <end position="104"/>
    </location>
</feature>